<comment type="similarity">
    <text evidence="2">Belongs to the UPF0758 family.</text>
</comment>
<sequence>MADHATLIDEANLETAAPGPAALETASAPLVRGKWLKNDMPRERLIEQGASVLSDTELIVLILGSGLPGHDVFDVARTLLDRFGSLRAMLDATYTDFADLRGIGPAKKTQLLAIMEMARRSLVDKMRMRSLINSPEAVENYLRLRIGGRPQEIFVSLFLDARHRLIRCEESAQGTLTRMAVYPREIVRRALSLNAASLIVAHNHPSGAVQPSASDCRLTHTLRDALTLIDVQLVDHLVIGTDSVYSFARAGWP</sequence>
<accession>Q13UX3</accession>
<evidence type="ECO:0000255" key="1">
    <source>
        <dbReference type="PROSITE-ProRule" id="PRU01182"/>
    </source>
</evidence>
<evidence type="ECO:0000305" key="2"/>
<proteinExistence type="inferred from homology"/>
<name>Y3578_PARXL</name>
<dbReference type="EMBL" id="CP000270">
    <property type="protein sequence ID" value="ABE32116.1"/>
    <property type="molecule type" value="Genomic_DNA"/>
</dbReference>
<dbReference type="RefSeq" id="WP_011489622.1">
    <property type="nucleotide sequence ID" value="NC_007951.1"/>
</dbReference>
<dbReference type="SMR" id="Q13UX3"/>
<dbReference type="STRING" id="266265.Bxe_A0818"/>
<dbReference type="KEGG" id="bxb:DR64_2983"/>
<dbReference type="KEGG" id="bxe:Bxe_A0818"/>
<dbReference type="PATRIC" id="fig|266265.5.peg.3767"/>
<dbReference type="eggNOG" id="COG2003">
    <property type="taxonomic scope" value="Bacteria"/>
</dbReference>
<dbReference type="OrthoDB" id="9804482at2"/>
<dbReference type="Proteomes" id="UP000001817">
    <property type="component" value="Chromosome 1"/>
</dbReference>
<dbReference type="GO" id="GO:0046872">
    <property type="term" value="F:metal ion binding"/>
    <property type="evidence" value="ECO:0007669"/>
    <property type="project" value="UniProtKB-KW"/>
</dbReference>
<dbReference type="GO" id="GO:0008237">
    <property type="term" value="F:metallopeptidase activity"/>
    <property type="evidence" value="ECO:0007669"/>
    <property type="project" value="UniProtKB-KW"/>
</dbReference>
<dbReference type="GO" id="GO:0006508">
    <property type="term" value="P:proteolysis"/>
    <property type="evidence" value="ECO:0007669"/>
    <property type="project" value="UniProtKB-KW"/>
</dbReference>
<dbReference type="CDD" id="cd08071">
    <property type="entry name" value="MPN_DUF2466"/>
    <property type="match status" value="1"/>
</dbReference>
<dbReference type="Gene3D" id="1.10.150.20">
    <property type="entry name" value="5' to 3' exonuclease, C-terminal subdomain"/>
    <property type="match status" value="1"/>
</dbReference>
<dbReference type="Gene3D" id="3.40.140.10">
    <property type="entry name" value="Cytidine Deaminase, domain 2"/>
    <property type="match status" value="1"/>
</dbReference>
<dbReference type="InterPro" id="IPR037518">
    <property type="entry name" value="MPN"/>
</dbReference>
<dbReference type="InterPro" id="IPR025657">
    <property type="entry name" value="RadC_JAB"/>
</dbReference>
<dbReference type="InterPro" id="IPR010994">
    <property type="entry name" value="RuvA_2-like"/>
</dbReference>
<dbReference type="InterPro" id="IPR001405">
    <property type="entry name" value="UPF0758"/>
</dbReference>
<dbReference type="InterPro" id="IPR020891">
    <property type="entry name" value="UPF0758_CS"/>
</dbReference>
<dbReference type="InterPro" id="IPR046778">
    <property type="entry name" value="UPF0758_N"/>
</dbReference>
<dbReference type="NCBIfam" id="NF000642">
    <property type="entry name" value="PRK00024.1"/>
    <property type="match status" value="1"/>
</dbReference>
<dbReference type="NCBIfam" id="TIGR00608">
    <property type="entry name" value="radc"/>
    <property type="match status" value="1"/>
</dbReference>
<dbReference type="PANTHER" id="PTHR30471">
    <property type="entry name" value="DNA REPAIR PROTEIN RADC"/>
    <property type="match status" value="1"/>
</dbReference>
<dbReference type="PANTHER" id="PTHR30471:SF3">
    <property type="entry name" value="UPF0758 PROTEIN YEES-RELATED"/>
    <property type="match status" value="1"/>
</dbReference>
<dbReference type="Pfam" id="PF04002">
    <property type="entry name" value="RadC"/>
    <property type="match status" value="1"/>
</dbReference>
<dbReference type="Pfam" id="PF20582">
    <property type="entry name" value="UPF0758_N"/>
    <property type="match status" value="1"/>
</dbReference>
<dbReference type="SUPFAM" id="SSF47781">
    <property type="entry name" value="RuvA domain 2-like"/>
    <property type="match status" value="1"/>
</dbReference>
<dbReference type="PROSITE" id="PS50249">
    <property type="entry name" value="MPN"/>
    <property type="match status" value="1"/>
</dbReference>
<dbReference type="PROSITE" id="PS01302">
    <property type="entry name" value="UPF0758"/>
    <property type="match status" value="1"/>
</dbReference>
<feature type="chain" id="PRO_0000322681" description="UPF0758 protein Bxeno_A3578">
    <location>
        <begin position="1"/>
        <end position="253"/>
    </location>
</feature>
<feature type="domain" description="MPN" evidence="1">
    <location>
        <begin position="131"/>
        <end position="253"/>
    </location>
</feature>
<feature type="short sequence motif" description="JAMM motif" evidence="1">
    <location>
        <begin position="202"/>
        <end position="215"/>
    </location>
</feature>
<feature type="binding site" evidence="1">
    <location>
        <position position="202"/>
    </location>
    <ligand>
        <name>Zn(2+)</name>
        <dbReference type="ChEBI" id="CHEBI:29105"/>
        <note>catalytic</note>
    </ligand>
</feature>
<feature type="binding site" evidence="1">
    <location>
        <position position="204"/>
    </location>
    <ligand>
        <name>Zn(2+)</name>
        <dbReference type="ChEBI" id="CHEBI:29105"/>
        <note>catalytic</note>
    </ligand>
</feature>
<feature type="binding site" evidence="1">
    <location>
        <position position="215"/>
    </location>
    <ligand>
        <name>Zn(2+)</name>
        <dbReference type="ChEBI" id="CHEBI:29105"/>
        <note>catalytic</note>
    </ligand>
</feature>
<protein>
    <recommendedName>
        <fullName>UPF0758 protein Bxeno_A3578</fullName>
    </recommendedName>
</protein>
<organism>
    <name type="scientific">Paraburkholderia xenovorans (strain LB400)</name>
    <dbReference type="NCBI Taxonomy" id="266265"/>
    <lineage>
        <taxon>Bacteria</taxon>
        <taxon>Pseudomonadati</taxon>
        <taxon>Pseudomonadota</taxon>
        <taxon>Betaproteobacteria</taxon>
        <taxon>Burkholderiales</taxon>
        <taxon>Burkholderiaceae</taxon>
        <taxon>Paraburkholderia</taxon>
    </lineage>
</organism>
<reference key="1">
    <citation type="journal article" date="2006" name="Proc. Natl. Acad. Sci. U.S.A.">
        <title>Burkholderia xenovorans LB400 harbors a multi-replicon, 9.73-Mbp genome shaped for versatility.</title>
        <authorList>
            <person name="Chain P.S.G."/>
            <person name="Denef V.J."/>
            <person name="Konstantinidis K.T."/>
            <person name="Vergez L.M."/>
            <person name="Agullo L."/>
            <person name="Reyes V.L."/>
            <person name="Hauser L."/>
            <person name="Cordova M."/>
            <person name="Gomez L."/>
            <person name="Gonzalez M."/>
            <person name="Land M."/>
            <person name="Lao V."/>
            <person name="Larimer F."/>
            <person name="LiPuma J.J."/>
            <person name="Mahenthiralingam E."/>
            <person name="Malfatti S.A."/>
            <person name="Marx C.J."/>
            <person name="Parnell J.J."/>
            <person name="Ramette A."/>
            <person name="Richardson P."/>
            <person name="Seeger M."/>
            <person name="Smith D."/>
            <person name="Spilker T."/>
            <person name="Sul W.J."/>
            <person name="Tsoi T.V."/>
            <person name="Ulrich L.E."/>
            <person name="Zhulin I.B."/>
            <person name="Tiedje J.M."/>
        </authorList>
    </citation>
    <scope>NUCLEOTIDE SEQUENCE [LARGE SCALE GENOMIC DNA]</scope>
    <source>
        <strain>LB400</strain>
    </source>
</reference>
<gene>
    <name type="ordered locus">Bxeno_A3578</name>
    <name type="ORF">Bxe_A0818</name>
</gene>
<keyword id="KW-0378">Hydrolase</keyword>
<keyword id="KW-0479">Metal-binding</keyword>
<keyword id="KW-0482">Metalloprotease</keyword>
<keyword id="KW-0645">Protease</keyword>
<keyword id="KW-1185">Reference proteome</keyword>
<keyword id="KW-0862">Zinc</keyword>